<evidence type="ECO:0000305" key="1"/>
<dbReference type="EMBL" id="X69979">
    <property type="protein sequence ID" value="CAA49599.1"/>
    <property type="molecule type" value="mRNA"/>
</dbReference>
<dbReference type="PIR" id="JQ2232">
    <property type="entry name" value="S33899"/>
</dbReference>
<dbReference type="RefSeq" id="NP_001233939.1">
    <property type="nucleotide sequence ID" value="NM_001247010.2"/>
</dbReference>
<dbReference type="PDB" id="7QIW">
    <property type="method" value="EM"/>
    <property type="resolution" value="2.35 A"/>
    <property type="chains" value="m=1-69"/>
</dbReference>
<dbReference type="PDB" id="7QIZ">
    <property type="method" value="EM"/>
    <property type="resolution" value="2.38 A"/>
    <property type="chains" value="m=1-69"/>
</dbReference>
<dbReference type="PDBsum" id="7QIW"/>
<dbReference type="PDBsum" id="7QIZ"/>
<dbReference type="EMDB" id="EMD-14001"/>
<dbReference type="EMDB" id="EMD-14004"/>
<dbReference type="SMR" id="P46291"/>
<dbReference type="FunCoup" id="P46291">
    <property type="interactions" value="2577"/>
</dbReference>
<dbReference type="STRING" id="4081.P46291"/>
<dbReference type="PaxDb" id="4081-Solyc05g055640.2.1"/>
<dbReference type="GeneID" id="544287"/>
<dbReference type="KEGG" id="sly:544287"/>
<dbReference type="eggNOG" id="KOG3499">
    <property type="taxonomic scope" value="Eukaryota"/>
</dbReference>
<dbReference type="HOGENOM" id="CLU_152057_2_0_1"/>
<dbReference type="InParanoid" id="P46291"/>
<dbReference type="OrthoDB" id="1257187at2759"/>
<dbReference type="PhylomeDB" id="P46291"/>
<dbReference type="Proteomes" id="UP000004994">
    <property type="component" value="Unplaced"/>
</dbReference>
<dbReference type="ExpressionAtlas" id="P46291">
    <property type="expression patterns" value="baseline"/>
</dbReference>
<dbReference type="GO" id="GO:0022625">
    <property type="term" value="C:cytosolic large ribosomal subunit"/>
    <property type="evidence" value="ECO:0000318"/>
    <property type="project" value="GO_Central"/>
</dbReference>
<dbReference type="GO" id="GO:0003735">
    <property type="term" value="F:structural constituent of ribosome"/>
    <property type="evidence" value="ECO:0000318"/>
    <property type="project" value="GO_Central"/>
</dbReference>
<dbReference type="GO" id="GO:0022618">
    <property type="term" value="P:protein-RNA complex assembly"/>
    <property type="evidence" value="ECO:0000318"/>
    <property type="project" value="GO_Central"/>
</dbReference>
<dbReference type="GO" id="GO:0006412">
    <property type="term" value="P:translation"/>
    <property type="evidence" value="ECO:0007669"/>
    <property type="project" value="InterPro"/>
</dbReference>
<dbReference type="FunFam" id="3.30.720.90:FF:000001">
    <property type="entry name" value="60S ribosomal protein L38"/>
    <property type="match status" value="1"/>
</dbReference>
<dbReference type="Gene3D" id="3.30.720.90">
    <property type="match status" value="1"/>
</dbReference>
<dbReference type="InterPro" id="IPR002675">
    <property type="entry name" value="Ribosomal_eL38"/>
</dbReference>
<dbReference type="InterPro" id="IPR038464">
    <property type="entry name" value="Ribosomal_eL38_sf"/>
</dbReference>
<dbReference type="PANTHER" id="PTHR10965">
    <property type="entry name" value="60S RIBOSOMAL PROTEIN L38"/>
    <property type="match status" value="1"/>
</dbReference>
<dbReference type="PANTHER" id="PTHR10965:SF10">
    <property type="entry name" value="60S RIBOSOMAL PROTEIN L38"/>
    <property type="match status" value="1"/>
</dbReference>
<dbReference type="Pfam" id="PF01781">
    <property type="entry name" value="Ribosomal_L38e"/>
    <property type="match status" value="1"/>
</dbReference>
<keyword id="KW-0002">3D-structure</keyword>
<keyword id="KW-1185">Reference proteome</keyword>
<keyword id="KW-0687">Ribonucleoprotein</keyword>
<keyword id="KW-0689">Ribosomal protein</keyword>
<name>RL38_SOLLC</name>
<proteinExistence type="evidence at protein level"/>
<sequence length="69" mass="8084">MPKQIHEIKDFLLTARRKDARTVKIKKNKDMVKFKVRCSKYLYTLCVSDFEKADKLKQSLPPGLSVQDL</sequence>
<accession>P46291</accession>
<reference key="1">
    <citation type="journal article" date="1993" name="Plant Cell">
        <title>The patterns of gene expression in the tomato shoot apical meristem.</title>
        <authorList>
            <person name="Fleming A.J."/>
            <person name="Mandel T."/>
            <person name="Roth I."/>
            <person name="Kuhlemeier C."/>
        </authorList>
    </citation>
    <scope>NUCLEOTIDE SEQUENCE [MRNA]</scope>
    <source>
        <strain>cv. Moneymaker</strain>
        <tissue>Meristem</tissue>
    </source>
</reference>
<protein>
    <recommendedName>
        <fullName evidence="1">Large ribosomal subunit protein eL38</fullName>
    </recommendedName>
    <alternativeName>
        <fullName>60S ribosomal protein L38</fullName>
    </alternativeName>
</protein>
<organism>
    <name type="scientific">Solanum lycopersicum</name>
    <name type="common">Tomato</name>
    <name type="synonym">Lycopersicon esculentum</name>
    <dbReference type="NCBI Taxonomy" id="4081"/>
    <lineage>
        <taxon>Eukaryota</taxon>
        <taxon>Viridiplantae</taxon>
        <taxon>Streptophyta</taxon>
        <taxon>Embryophyta</taxon>
        <taxon>Tracheophyta</taxon>
        <taxon>Spermatophyta</taxon>
        <taxon>Magnoliopsida</taxon>
        <taxon>eudicotyledons</taxon>
        <taxon>Gunneridae</taxon>
        <taxon>Pentapetalae</taxon>
        <taxon>asterids</taxon>
        <taxon>lamiids</taxon>
        <taxon>Solanales</taxon>
        <taxon>Solanaceae</taxon>
        <taxon>Solanoideae</taxon>
        <taxon>Solaneae</taxon>
        <taxon>Solanum</taxon>
        <taxon>Solanum subgen. Lycopersicon</taxon>
    </lineage>
</organism>
<gene>
    <name type="primary">RPL38</name>
</gene>
<feature type="chain" id="PRO_0000215441" description="Large ribosomal subunit protein eL38">
    <location>
        <begin position="1"/>
        <end position="69"/>
    </location>
</feature>
<comment type="similarity">
    <text evidence="1">Belongs to the eukaryotic ribosomal protein eL38 family.</text>
</comment>